<evidence type="ECO:0000255" key="1">
    <source>
        <dbReference type="HAMAP-Rule" id="MF_00076"/>
    </source>
</evidence>
<protein>
    <recommendedName>
        <fullName evidence="1">Imidazoleglycerol-phosphate dehydratase</fullName>
        <shortName evidence="1">IGPD</shortName>
        <ecNumber evidence="1">4.2.1.19</ecNumber>
    </recommendedName>
</protein>
<organism>
    <name type="scientific">Caldicellulosiruptor saccharolyticus (strain ATCC 43494 / DSM 8903 / Tp8T 6331)</name>
    <dbReference type="NCBI Taxonomy" id="351627"/>
    <lineage>
        <taxon>Bacteria</taxon>
        <taxon>Bacillati</taxon>
        <taxon>Bacillota</taxon>
        <taxon>Bacillota incertae sedis</taxon>
        <taxon>Caldicellulosiruptorales</taxon>
        <taxon>Caldicellulosiruptoraceae</taxon>
        <taxon>Caldicellulosiruptor</taxon>
    </lineage>
</organism>
<sequence length="194" mass="21796">MNARIAEVQRKTKETEIKMVLNIDGDGEYKISTGIGFFDHMLQLFCHHGKFNIQVEAKGDLHIDDHHTIEDVGIVLGQAFLKAISDKRGIKRYSHIILPMDEALIMVAIDISGRPYLAFDVDFRLPKLGEMNSQMVVEFFRAFVSSAKVTLHVKKISGENDHHVCEAIFKAFGRVLKDACTIVDDKIPSSKGVL</sequence>
<feature type="chain" id="PRO_0000336298" description="Imidazoleglycerol-phosphate dehydratase">
    <location>
        <begin position="1"/>
        <end position="194"/>
    </location>
</feature>
<accession>A4XL23</accession>
<comment type="catalytic activity">
    <reaction evidence="1">
        <text>D-erythro-1-(imidazol-4-yl)glycerol 3-phosphate = 3-(imidazol-4-yl)-2-oxopropyl phosphate + H2O</text>
        <dbReference type="Rhea" id="RHEA:11040"/>
        <dbReference type="ChEBI" id="CHEBI:15377"/>
        <dbReference type="ChEBI" id="CHEBI:57766"/>
        <dbReference type="ChEBI" id="CHEBI:58278"/>
        <dbReference type="EC" id="4.2.1.19"/>
    </reaction>
</comment>
<comment type="pathway">
    <text evidence="1">Amino-acid biosynthesis; L-histidine biosynthesis; L-histidine from 5-phospho-alpha-D-ribose 1-diphosphate: step 6/9.</text>
</comment>
<comment type="subcellular location">
    <subcellularLocation>
        <location evidence="1">Cytoplasm</location>
    </subcellularLocation>
</comment>
<comment type="similarity">
    <text evidence="1">Belongs to the imidazoleglycerol-phosphate dehydratase family.</text>
</comment>
<proteinExistence type="inferred from homology"/>
<gene>
    <name evidence="1" type="primary">hisB</name>
    <name type="ordered locus">Csac_2023</name>
</gene>
<keyword id="KW-0028">Amino-acid biosynthesis</keyword>
<keyword id="KW-0963">Cytoplasm</keyword>
<keyword id="KW-0368">Histidine biosynthesis</keyword>
<keyword id="KW-0456">Lyase</keyword>
<reference key="1">
    <citation type="submission" date="2007-04" db="EMBL/GenBank/DDBJ databases">
        <title>Genome sequence of the thermophilic hydrogen-producing bacterium Caldicellulosiruptor saccharolyticus DSM 8903.</title>
        <authorList>
            <person name="Copeland A."/>
            <person name="Lucas S."/>
            <person name="Lapidus A."/>
            <person name="Barry K."/>
            <person name="Detter J.C."/>
            <person name="Glavina del Rio T."/>
            <person name="Hammon N."/>
            <person name="Israni S."/>
            <person name="Dalin E."/>
            <person name="Tice H."/>
            <person name="Pitluck S."/>
            <person name="Kiss H."/>
            <person name="Brettin T."/>
            <person name="Bruce D."/>
            <person name="Han C."/>
            <person name="Schmutz J."/>
            <person name="Larimer F."/>
            <person name="Land M."/>
            <person name="Hauser L."/>
            <person name="Kyrpides N."/>
            <person name="Lykidis A."/>
            <person name="van de Werken H.J.G."/>
            <person name="Verhaart M.R.A."/>
            <person name="VanFossen A.L."/>
            <person name="Lewis D.L."/>
            <person name="Nichols J.D."/>
            <person name="Goorissen H.P."/>
            <person name="van Niel E.W.J."/>
            <person name="Stams F.J.M."/>
            <person name="Willquist K.U."/>
            <person name="Ward D.E."/>
            <person name="van der Oost J."/>
            <person name="Kelly R.M."/>
            <person name="Kengen S.M.W."/>
            <person name="Richardson P."/>
        </authorList>
    </citation>
    <scope>NUCLEOTIDE SEQUENCE [LARGE SCALE GENOMIC DNA]</scope>
    <source>
        <strain>ATCC 43494 / DSM 8903 / Tp8T 6331</strain>
    </source>
</reference>
<dbReference type="EC" id="4.2.1.19" evidence="1"/>
<dbReference type="EMBL" id="CP000679">
    <property type="protein sequence ID" value="ABP67608.1"/>
    <property type="molecule type" value="Genomic_DNA"/>
</dbReference>
<dbReference type="RefSeq" id="WP_011917543.1">
    <property type="nucleotide sequence ID" value="NC_009437.1"/>
</dbReference>
<dbReference type="SMR" id="A4XL23"/>
<dbReference type="STRING" id="351627.Csac_2023"/>
<dbReference type="KEGG" id="csc:Csac_2023"/>
<dbReference type="eggNOG" id="COG0131">
    <property type="taxonomic scope" value="Bacteria"/>
</dbReference>
<dbReference type="HOGENOM" id="CLU_044308_3_0_9"/>
<dbReference type="OrthoDB" id="9790411at2"/>
<dbReference type="UniPathway" id="UPA00031">
    <property type="reaction ID" value="UER00011"/>
</dbReference>
<dbReference type="Proteomes" id="UP000000256">
    <property type="component" value="Chromosome"/>
</dbReference>
<dbReference type="GO" id="GO:0005737">
    <property type="term" value="C:cytoplasm"/>
    <property type="evidence" value="ECO:0007669"/>
    <property type="project" value="UniProtKB-SubCell"/>
</dbReference>
<dbReference type="GO" id="GO:0004424">
    <property type="term" value="F:imidazoleglycerol-phosphate dehydratase activity"/>
    <property type="evidence" value="ECO:0007669"/>
    <property type="project" value="UniProtKB-UniRule"/>
</dbReference>
<dbReference type="GO" id="GO:0000105">
    <property type="term" value="P:L-histidine biosynthetic process"/>
    <property type="evidence" value="ECO:0007669"/>
    <property type="project" value="UniProtKB-UniRule"/>
</dbReference>
<dbReference type="CDD" id="cd07914">
    <property type="entry name" value="IGPD"/>
    <property type="match status" value="1"/>
</dbReference>
<dbReference type="FunFam" id="3.30.230.40:FF:000001">
    <property type="entry name" value="Imidazoleglycerol-phosphate dehydratase HisB"/>
    <property type="match status" value="1"/>
</dbReference>
<dbReference type="FunFam" id="3.30.230.40:FF:000003">
    <property type="entry name" value="Imidazoleglycerol-phosphate dehydratase HisB"/>
    <property type="match status" value="1"/>
</dbReference>
<dbReference type="Gene3D" id="3.30.230.40">
    <property type="entry name" value="Imidazole glycerol phosphate dehydratase, domain 1"/>
    <property type="match status" value="2"/>
</dbReference>
<dbReference type="HAMAP" id="MF_00076">
    <property type="entry name" value="HisB"/>
    <property type="match status" value="1"/>
</dbReference>
<dbReference type="InterPro" id="IPR038494">
    <property type="entry name" value="IGPD_sf"/>
</dbReference>
<dbReference type="InterPro" id="IPR000807">
    <property type="entry name" value="ImidazoleglycerolP_deHydtase"/>
</dbReference>
<dbReference type="InterPro" id="IPR020565">
    <property type="entry name" value="ImidazoleglycerP_deHydtase_CS"/>
</dbReference>
<dbReference type="InterPro" id="IPR020568">
    <property type="entry name" value="Ribosomal_Su5_D2-typ_SF"/>
</dbReference>
<dbReference type="NCBIfam" id="NF002111">
    <property type="entry name" value="PRK00951.2-1"/>
    <property type="match status" value="1"/>
</dbReference>
<dbReference type="NCBIfam" id="NF002114">
    <property type="entry name" value="PRK00951.2-4"/>
    <property type="match status" value="1"/>
</dbReference>
<dbReference type="PANTHER" id="PTHR23133:SF2">
    <property type="entry name" value="IMIDAZOLEGLYCEROL-PHOSPHATE DEHYDRATASE"/>
    <property type="match status" value="1"/>
</dbReference>
<dbReference type="PANTHER" id="PTHR23133">
    <property type="entry name" value="IMIDAZOLEGLYCEROL-PHOSPHATE DEHYDRATASE HIS7"/>
    <property type="match status" value="1"/>
</dbReference>
<dbReference type="Pfam" id="PF00475">
    <property type="entry name" value="IGPD"/>
    <property type="match status" value="1"/>
</dbReference>
<dbReference type="SUPFAM" id="SSF54211">
    <property type="entry name" value="Ribosomal protein S5 domain 2-like"/>
    <property type="match status" value="2"/>
</dbReference>
<dbReference type="PROSITE" id="PS00954">
    <property type="entry name" value="IGP_DEHYDRATASE_1"/>
    <property type="match status" value="1"/>
</dbReference>
<dbReference type="PROSITE" id="PS00955">
    <property type="entry name" value="IGP_DEHYDRATASE_2"/>
    <property type="match status" value="1"/>
</dbReference>
<name>HIS7_CALS8</name>